<accession>Q9Y5Q5</accession>
<accession>B0ZBE3</accession>
<accession>Q2TBD2</accession>
<accession>Q4W5E5</accession>
<accession>Q4W5G6</accession>
<accession>Q9UHY2</accession>
<evidence type="ECO:0000250" key="1"/>
<evidence type="ECO:0000250" key="2">
    <source>
        <dbReference type="UniProtKB" id="Q9Z319"/>
    </source>
</evidence>
<evidence type="ECO:0000255" key="3"/>
<evidence type="ECO:0000255" key="4">
    <source>
        <dbReference type="PROSITE-ProRule" id="PRU00090"/>
    </source>
</evidence>
<evidence type="ECO:0000255" key="5">
    <source>
        <dbReference type="PROSITE-ProRule" id="PRU00124"/>
    </source>
</evidence>
<evidence type="ECO:0000255" key="6">
    <source>
        <dbReference type="PROSITE-ProRule" id="PRU00274"/>
    </source>
</evidence>
<evidence type="ECO:0000256" key="7">
    <source>
        <dbReference type="SAM" id="MobiDB-lite"/>
    </source>
</evidence>
<evidence type="ECO:0000269" key="8">
    <source>
    </source>
</evidence>
<evidence type="ECO:0000269" key="9">
    <source>
    </source>
</evidence>
<evidence type="ECO:0000269" key="10">
    <source>
    </source>
</evidence>
<evidence type="ECO:0000269" key="11">
    <source>
    </source>
</evidence>
<evidence type="ECO:0000269" key="12">
    <source>
    </source>
</evidence>
<evidence type="ECO:0000269" key="13">
    <source>
    </source>
</evidence>
<evidence type="ECO:0000269" key="14">
    <source>
    </source>
</evidence>
<evidence type="ECO:0000269" key="15">
    <source>
    </source>
</evidence>
<evidence type="ECO:0000269" key="16">
    <source>
    </source>
</evidence>
<evidence type="ECO:0000269" key="17">
    <source>
    </source>
</evidence>
<evidence type="ECO:0000269" key="18">
    <source>
    </source>
</evidence>
<evidence type="ECO:0000269" key="19">
    <source>
    </source>
</evidence>
<evidence type="ECO:0000269" key="20">
    <source>
    </source>
</evidence>
<evidence type="ECO:0000305" key="21"/>
<evidence type="ECO:0000305" key="22">
    <source>
    </source>
</evidence>
<evidence type="ECO:0000305" key="23">
    <source>
    </source>
</evidence>
<gene>
    <name type="primary">CORIN</name>
    <name type="synonym">CRN</name>
    <name type="synonym">TMPRSS10</name>
</gene>
<feature type="chain" id="PRO_0000088673" description="Atrial natriuretic peptide-converting enzyme">
    <location>
        <begin position="1"/>
        <end position="1042"/>
    </location>
</feature>
<feature type="chain" id="PRO_0000391765" description="Atrial natriuretic peptide-converting enzyme, N-terminal propeptide" evidence="21">
    <location>
        <begin position="1"/>
        <end position="801"/>
    </location>
</feature>
<feature type="chain" id="PRO_0000417984" description="Atrial natriuretic peptide-converting enzyme, 160 kDa soluble fragment" evidence="21">
    <location>
        <begin position="165"/>
        <end position="801"/>
    </location>
</feature>
<feature type="chain" id="PRO_0000417985" description="Atrial natriuretic peptide-converting enzyme, 100 kDa soluble fragment" evidence="21">
    <location>
        <begin position="428"/>
        <end position="801"/>
    </location>
</feature>
<feature type="chain" id="PRO_0000417986" description="Atrial natriuretic peptide-converting enzyme, 180 kDa soluble fragment" evidence="21">
    <location>
        <begin status="unknown"/>
        <end position="801"/>
    </location>
</feature>
<feature type="chain" id="PRO_0000391766" description="Atrial natriuretic peptide-converting enzyme, activated protease fragment" evidence="21">
    <location>
        <begin position="802"/>
        <end position="1042"/>
    </location>
</feature>
<feature type="topological domain" description="Cytoplasmic" evidence="3">
    <location>
        <begin position="1"/>
        <end position="45"/>
    </location>
</feature>
<feature type="transmembrane region" description="Helical; Signal-anchor for type II membrane protein" evidence="3">
    <location>
        <begin position="46"/>
        <end position="66"/>
    </location>
</feature>
<feature type="topological domain" description="Extracellular" evidence="3">
    <location>
        <begin position="67"/>
        <end position="1042"/>
    </location>
</feature>
<feature type="domain" description="FZ 1" evidence="4">
    <location>
        <begin position="134"/>
        <end position="259"/>
    </location>
</feature>
<feature type="domain" description="LDL-receptor class A 1" evidence="5">
    <location>
        <begin position="268"/>
        <end position="304"/>
    </location>
</feature>
<feature type="domain" description="LDL-receptor class A 2" evidence="5">
    <location>
        <begin position="305"/>
        <end position="340"/>
    </location>
</feature>
<feature type="domain" description="LDL-receptor class A 3" evidence="5">
    <location>
        <begin position="341"/>
        <end position="377"/>
    </location>
</feature>
<feature type="domain" description="LDL-receptor class A 4" evidence="5">
    <location>
        <begin position="378"/>
        <end position="415"/>
    </location>
</feature>
<feature type="domain" description="FZ 2" evidence="4">
    <location>
        <begin position="450"/>
        <end position="573"/>
    </location>
</feature>
<feature type="domain" description="LDL-receptor class A 5" evidence="5">
    <location>
        <begin position="579"/>
        <end position="614"/>
    </location>
</feature>
<feature type="domain" description="LDL-receptor class A 6" evidence="5">
    <location>
        <begin position="615"/>
        <end position="653"/>
    </location>
</feature>
<feature type="domain" description="LDL-receptor class A 7" evidence="5">
    <location>
        <begin position="654"/>
        <end position="689"/>
    </location>
</feature>
<feature type="domain" description="SRCR">
    <location>
        <begin position="690"/>
        <end position="801"/>
    </location>
</feature>
<feature type="domain" description="Peptidase S1" evidence="6">
    <location>
        <begin position="802"/>
        <end position="1035"/>
    </location>
</feature>
<feature type="region of interest" description="Disordered" evidence="7">
    <location>
        <begin position="1"/>
        <end position="25"/>
    </location>
</feature>
<feature type="short sequence motif" description="DDNN motif">
    <location>
        <begin position="26"/>
        <end position="29"/>
    </location>
</feature>
<feature type="active site" description="Charge relay system" evidence="1">
    <location>
        <position position="843"/>
    </location>
</feature>
<feature type="active site" description="Charge relay system" evidence="1">
    <location>
        <position position="892"/>
    </location>
</feature>
<feature type="active site" description="Charge relay system">
    <location>
        <position position="985"/>
    </location>
</feature>
<feature type="site" description="Cleavage; by autolysis">
    <location>
        <begin position="164"/>
        <end position="165"/>
    </location>
</feature>
<feature type="site" description="Cleavage; by autolysis">
    <location>
        <begin position="427"/>
        <end position="428"/>
    </location>
</feature>
<feature type="site" description="Cleavage" evidence="21">
    <location>
        <begin position="801"/>
        <end position="802"/>
    </location>
</feature>
<feature type="glycosylation site" description="N-linked (GlcNAc...) asparagine" evidence="3">
    <location>
        <position position="80"/>
    </location>
</feature>
<feature type="glycosylation site" description="N-linked (GlcNAc...) asparagine" evidence="3">
    <location>
        <position position="104"/>
    </location>
</feature>
<feature type="glycosylation site" description="N-linked (GlcNAc...) asparagine" evidence="3">
    <location>
        <position position="135"/>
    </location>
</feature>
<feature type="glycosylation site" description="N-linked (GlcNAc...) asparagine" evidence="3">
    <location>
        <position position="141"/>
    </location>
</feature>
<feature type="glycosylation site" description="N-linked (GlcNAc...) asparagine" evidence="3">
    <location>
        <position position="231"/>
    </location>
</feature>
<feature type="glycosylation site" description="N-linked (GlcNAc...) asparagine" evidence="3">
    <location>
        <position position="245"/>
    </location>
</feature>
<feature type="glycosylation site" description="N-linked (GlcNAc...) asparagine" evidence="3">
    <location>
        <position position="251"/>
    </location>
</feature>
<feature type="glycosylation site" description="N-linked (GlcNAc...) asparagine" evidence="3">
    <location>
        <position position="305"/>
    </location>
</feature>
<feature type="glycosylation site" description="N-linked (GlcNAc...) asparagine" evidence="3">
    <location>
        <position position="320"/>
    </location>
</feature>
<feature type="glycosylation site" description="N-linked (GlcNAc...) asparagine" evidence="3">
    <location>
        <position position="376"/>
    </location>
</feature>
<feature type="glycosylation site" description="N-linked (GlcNAc...) asparagine" evidence="3">
    <location>
        <position position="413"/>
    </location>
</feature>
<feature type="glycosylation site" description="N-linked (GlcNAc...) asparagine" evidence="3">
    <location>
        <position position="446"/>
    </location>
</feature>
<feature type="glycosylation site" description="N-linked (GlcNAc...) asparagine" evidence="3">
    <location>
        <position position="451"/>
    </location>
</feature>
<feature type="glycosylation site" description="N-linked (GlcNAc...) asparagine" evidence="3">
    <location>
        <position position="469"/>
    </location>
</feature>
<feature type="glycosylation site" description="N-linked (GlcNAc...) asparagine" evidence="3">
    <location>
        <position position="567"/>
    </location>
</feature>
<feature type="glycosylation site" description="N-linked (GlcNAc...) asparagine" evidence="3">
    <location>
        <position position="651"/>
    </location>
</feature>
<feature type="glycosylation site" description="N-linked (GlcNAc...) asparagine" evidence="3">
    <location>
        <position position="697"/>
    </location>
</feature>
<feature type="glycosylation site" description="N-linked (GlcNAc...) asparagine" evidence="3">
    <location>
        <position position="761"/>
    </location>
</feature>
<feature type="glycosylation site" description="N-linked (GlcNAc...) asparagine" evidence="3">
    <location>
        <position position="1022"/>
    </location>
</feature>
<feature type="disulfide bond" evidence="1">
    <location>
        <begin position="139"/>
        <end position="199"/>
    </location>
</feature>
<feature type="disulfide bond" evidence="1">
    <location>
        <begin position="147"/>
        <end position="192"/>
    </location>
</feature>
<feature type="disulfide bond" evidence="1">
    <location>
        <begin position="183"/>
        <end position="223"/>
    </location>
</feature>
<feature type="disulfide bond" evidence="1">
    <location>
        <begin position="212"/>
        <end position="256"/>
    </location>
</feature>
<feature type="disulfide bond" evidence="1">
    <location>
        <begin position="216"/>
        <end position="240"/>
    </location>
</feature>
<feature type="disulfide bond" evidence="1">
    <location>
        <begin position="269"/>
        <end position="282"/>
    </location>
</feature>
<feature type="disulfide bond" evidence="1">
    <location>
        <begin position="277"/>
        <end position="295"/>
    </location>
</feature>
<feature type="disulfide bond" evidence="1">
    <location>
        <begin position="289"/>
        <end position="304"/>
    </location>
</feature>
<feature type="disulfide bond" evidence="1">
    <location>
        <begin position="306"/>
        <end position="318"/>
    </location>
</feature>
<feature type="disulfide bond" evidence="1">
    <location>
        <begin position="313"/>
        <end position="331"/>
    </location>
</feature>
<feature type="disulfide bond" evidence="1">
    <location>
        <begin position="325"/>
        <end position="340"/>
    </location>
</feature>
<feature type="disulfide bond" evidence="1">
    <location>
        <begin position="342"/>
        <end position="355"/>
    </location>
</feature>
<feature type="disulfide bond" evidence="1">
    <location>
        <begin position="350"/>
        <end position="368"/>
    </location>
</feature>
<feature type="disulfide bond" evidence="1">
    <location>
        <begin position="362"/>
        <end position="377"/>
    </location>
</feature>
<feature type="disulfide bond" evidence="1">
    <location>
        <begin position="379"/>
        <end position="392"/>
    </location>
</feature>
<feature type="disulfide bond" evidence="1">
    <location>
        <begin position="387"/>
        <end position="405"/>
    </location>
</feature>
<feature type="disulfide bond" evidence="1">
    <location>
        <begin position="399"/>
        <end position="414"/>
    </location>
</feature>
<feature type="disulfide bond" evidence="1">
    <location>
        <begin position="455"/>
        <end position="518"/>
    </location>
</feature>
<feature type="disulfide bond" evidence="1">
    <location>
        <begin position="463"/>
        <end position="511"/>
    </location>
</feature>
<feature type="disulfide bond" evidence="1">
    <location>
        <begin position="502"/>
        <end position="540"/>
    </location>
</feature>
<feature type="disulfide bond" evidence="1">
    <location>
        <begin position="529"/>
        <end position="570"/>
    </location>
</feature>
<feature type="disulfide bond" evidence="1">
    <location>
        <begin position="533"/>
        <end position="557"/>
    </location>
</feature>
<feature type="disulfide bond" evidence="1">
    <location>
        <begin position="580"/>
        <end position="592"/>
    </location>
</feature>
<feature type="disulfide bond" evidence="1">
    <location>
        <begin position="587"/>
        <end position="605"/>
    </location>
</feature>
<feature type="disulfide bond" evidence="1">
    <location>
        <begin position="599"/>
        <end position="614"/>
    </location>
</feature>
<feature type="disulfide bond" evidence="1">
    <location>
        <begin position="616"/>
        <end position="630"/>
    </location>
</feature>
<feature type="disulfide bond" evidence="1">
    <location>
        <begin position="624"/>
        <end position="643"/>
    </location>
</feature>
<feature type="disulfide bond" evidence="1">
    <location>
        <begin position="637"/>
        <end position="652"/>
    </location>
</feature>
<feature type="disulfide bond" evidence="1">
    <location>
        <begin position="655"/>
        <end position="667"/>
    </location>
</feature>
<feature type="disulfide bond" evidence="1">
    <location>
        <begin position="662"/>
        <end position="680"/>
    </location>
</feature>
<feature type="disulfide bond" evidence="1">
    <location>
        <begin position="674"/>
        <end position="689"/>
    </location>
</feature>
<feature type="disulfide bond" description="Interchain (between N-terminal propeptide and activated protease fragment chains)" evidence="23">
    <location>
        <begin position="790"/>
        <end position="912"/>
    </location>
</feature>
<feature type="disulfide bond" evidence="1">
    <location>
        <begin position="828"/>
        <end position="844"/>
    </location>
</feature>
<feature type="disulfide bond" evidence="1">
    <location>
        <begin position="926"/>
        <end position="991"/>
    </location>
</feature>
<feature type="disulfide bond" evidence="1">
    <location>
        <begin position="955"/>
        <end position="970"/>
    </location>
</feature>
<feature type="disulfide bond" evidence="1">
    <location>
        <begin position="981"/>
        <end position="1010"/>
    </location>
</feature>
<feature type="splice variant" id="VSP_043952" description="In isoform 2." evidence="21">
    <location>
        <begin position="1"/>
        <end position="29"/>
    </location>
</feature>
<feature type="sequence variant" id="VAR_038000" description="In dbSNP:rs2289433." evidence="8 11">
    <original>C</original>
    <variation>Y</variation>
    <location>
        <position position="13"/>
    </location>
</feature>
<feature type="sequence variant" id="VAR_067795" description="In PEE5; dbSNP:rs387906894." evidence="19">
    <original>K</original>
    <variation>E</variation>
    <location>
        <position position="317"/>
    </location>
</feature>
<feature type="sequence variant" id="VAR_067796" description="In dbSNP:rs13105608.">
    <original>D</original>
    <variation>G</variation>
    <location>
        <position position="444"/>
    </location>
</feature>
<feature type="sequence variant" id="VAR_067797" description="In PEE5; dbSNP:rs387906895." evidence="19">
    <original>S</original>
    <variation>G</variation>
    <location>
        <position position="472"/>
    </location>
</feature>
<feature type="sequence variant" id="VAR_038001" description="In dbSNP:rs11934749." evidence="8 11 13">
    <original>H</original>
    <variation>R</variation>
    <location>
        <position position="525"/>
    </location>
</feature>
<feature type="mutagenesis site" description="Impairs cell membrane targeting; when associated with A-30." evidence="17">
    <original>D</original>
    <variation>A</variation>
    <location>
        <position position="26"/>
    </location>
</feature>
<feature type="mutagenesis site" description="Impairs cell membrane targeting; when associated with A-26." evidence="17">
    <original>M</original>
    <variation>A</variation>
    <location>
        <position position="30"/>
    </location>
</feature>
<feature type="mutagenesis site" description="Does not affect autocatalytic cleavage." evidence="16">
    <original>R</original>
    <variation>A</variation>
    <location>
        <position position="134"/>
    </location>
</feature>
<feature type="mutagenesis site" description="Affects autocatalytic cleavage and production of Atrial natriuretic peptide-converting enzyme, 160 kDa soluble fragment." evidence="16">
    <original>R</original>
    <variation>A</variation>
    <location>
        <position position="164"/>
    </location>
</feature>
<feature type="mutagenesis site" description="Does not affect autocatalytic cleavage." evidence="16">
    <original>R</original>
    <variation>A</variation>
    <location>
        <position position="180"/>
    </location>
</feature>
<feature type="mutagenesis site" description="Does not affect autocatalytic cleavage." evidence="16">
    <original>R</original>
    <variation>A</variation>
    <location>
        <position position="213"/>
    </location>
</feature>
<feature type="mutagenesis site" description="Does not affect autocatalytic cleavage." evidence="16">
    <original>R</original>
    <variation>A</variation>
    <location>
        <position position="239"/>
    </location>
</feature>
<feature type="mutagenesis site" description="Does not affect autocatalytic cleavage." evidence="16">
    <original>R</original>
    <variation>A</variation>
    <location>
        <position position="244"/>
    </location>
</feature>
<feature type="mutagenesis site" description="Affects autocatalytic cleavage and production of Atrial natriuretic peptide-converting enzyme, 100 kDa soluble fragment." evidence="16">
    <original>R</original>
    <variation>A</variation>
    <location>
        <position position="427"/>
    </location>
</feature>
<feature type="mutagenesis site" description="Loss of activity towards NPPA." evidence="10 16">
    <original>R</original>
    <variation>A</variation>
    <location>
        <position position="801"/>
    </location>
</feature>
<feature type="mutagenesis site" description="Loss of activity towards NPPA." evidence="9 10 16">
    <original>S</original>
    <variation>A</variation>
    <location>
        <position position="985"/>
    </location>
</feature>
<feature type="sequence conflict" description="In Ref. 4; AAF21966." evidence="21" ref="4">
    <original>W</original>
    <variation>R</variation>
    <location>
        <position position="854"/>
    </location>
</feature>
<feature type="sequence conflict" description="In Ref. 4; AAF21966." evidence="21" ref="4">
    <original>K</original>
    <variation>R</variation>
    <location>
        <position position="876"/>
    </location>
</feature>
<protein>
    <recommendedName>
        <fullName>Atrial natriuretic peptide-converting enzyme</fullName>
        <ecNumber>3.4.21.-</ecNumber>
    </recommendedName>
    <alternativeName>
        <fullName>Corin</fullName>
    </alternativeName>
    <alternativeName>
        <fullName>Heart-specific serine proteinase ATC2</fullName>
    </alternativeName>
    <alternativeName>
        <fullName>Pro-ANP-converting enzyme</fullName>
    </alternativeName>
    <alternativeName>
        <fullName>Transmembrane protease serine 10</fullName>
    </alternativeName>
    <component>
        <recommendedName>
            <fullName>Atrial natriuretic peptide-converting enzyme, N-terminal propeptide</fullName>
        </recommendedName>
    </component>
    <component>
        <recommendedName>
            <fullName>Atrial natriuretic peptide-converting enzyme, activated protease fragment</fullName>
        </recommendedName>
    </component>
    <component>
        <recommendedName>
            <fullName>Atrial natriuretic peptide-converting enzyme, 180 kDa soluble fragment</fullName>
        </recommendedName>
    </component>
    <component>
        <recommendedName>
            <fullName>Atrial natriuretic peptide-converting enzyme, 160 kDa soluble fragment</fullName>
        </recommendedName>
    </component>
    <component>
        <recommendedName>
            <fullName>Atrial natriuretic peptide-converting enzyme, 100 kDa soluble fragment</fullName>
        </recommendedName>
    </component>
</protein>
<proteinExistence type="evidence at protein level"/>
<dbReference type="EC" id="3.4.21.-"/>
<dbReference type="EMBL" id="AF133845">
    <property type="protein sequence ID" value="AAD31850.1"/>
    <property type="molecule type" value="mRNA"/>
</dbReference>
<dbReference type="EMBL" id="AC092597">
    <property type="status" value="NOT_ANNOTATED_CDS"/>
    <property type="molecule type" value="Genomic_DNA"/>
</dbReference>
<dbReference type="EMBL" id="AC104646">
    <property type="protein sequence ID" value="AAY40991.1"/>
    <property type="molecule type" value="Genomic_DNA"/>
</dbReference>
<dbReference type="EMBL" id="AC107068">
    <property type="protein sequence ID" value="AAY40917.1"/>
    <property type="molecule type" value="Genomic_DNA"/>
</dbReference>
<dbReference type="EMBL" id="EU326305">
    <property type="protein sequence ID" value="ACA05911.1"/>
    <property type="molecule type" value="Genomic_DNA"/>
</dbReference>
<dbReference type="EMBL" id="BC110451">
    <property type="protein sequence ID" value="AAI10452.1"/>
    <property type="molecule type" value="mRNA"/>
</dbReference>
<dbReference type="EMBL" id="AF113248">
    <property type="protein sequence ID" value="AAF21966.1"/>
    <property type="molecule type" value="mRNA"/>
</dbReference>
<dbReference type="CCDS" id="CCDS3477.1">
    <molecule id="Q9Y5Q5-1"/>
</dbReference>
<dbReference type="RefSeq" id="NP_001265514.1">
    <property type="nucleotide sequence ID" value="NM_001278585.1"/>
</dbReference>
<dbReference type="RefSeq" id="NP_006578.2">
    <molecule id="Q9Y5Q5-1"/>
    <property type="nucleotide sequence ID" value="NM_006587.3"/>
</dbReference>
<dbReference type="SMR" id="Q9Y5Q5"/>
<dbReference type="BioGRID" id="115937">
    <property type="interactions" value="5"/>
</dbReference>
<dbReference type="FunCoup" id="Q9Y5Q5">
    <property type="interactions" value="256"/>
</dbReference>
<dbReference type="IntAct" id="Q9Y5Q5">
    <property type="interactions" value="4"/>
</dbReference>
<dbReference type="STRING" id="9606.ENSP00000273857"/>
<dbReference type="MEROPS" id="S01.019"/>
<dbReference type="TCDB" id="8.A.131.1.8">
    <property type="family name" value="the transmembrane protease serine 3 (tmprss3) family"/>
</dbReference>
<dbReference type="GlyCosmos" id="Q9Y5Q5">
    <property type="glycosylation" value="19 sites, No reported glycans"/>
</dbReference>
<dbReference type="GlyGen" id="Q9Y5Q5">
    <property type="glycosylation" value="21 sites, 1 O-linked glycan (1 site)"/>
</dbReference>
<dbReference type="iPTMnet" id="Q9Y5Q5"/>
<dbReference type="PhosphoSitePlus" id="Q9Y5Q5"/>
<dbReference type="BioMuta" id="CORIN"/>
<dbReference type="DMDM" id="317373348"/>
<dbReference type="MassIVE" id="Q9Y5Q5"/>
<dbReference type="PaxDb" id="9606-ENSP00000273857"/>
<dbReference type="PeptideAtlas" id="Q9Y5Q5"/>
<dbReference type="ProteomicsDB" id="86472">
    <molecule id="Q9Y5Q5-1"/>
</dbReference>
<dbReference type="ProteomicsDB" id="86473">
    <molecule id="Q9Y5Q5-2"/>
</dbReference>
<dbReference type="Antibodypedia" id="23775">
    <property type="antibodies" value="327 antibodies from 27 providers"/>
</dbReference>
<dbReference type="DNASU" id="10699"/>
<dbReference type="Ensembl" id="ENST00000273857.9">
    <molecule id="Q9Y5Q5-1"/>
    <property type="protein sequence ID" value="ENSP00000273857.4"/>
    <property type="gene ID" value="ENSG00000145244.12"/>
</dbReference>
<dbReference type="GeneID" id="10699"/>
<dbReference type="KEGG" id="hsa:10699"/>
<dbReference type="MANE-Select" id="ENST00000273857.9">
    <property type="protein sequence ID" value="ENSP00000273857.4"/>
    <property type="RefSeq nucleotide sequence ID" value="NM_006587.4"/>
    <property type="RefSeq protein sequence ID" value="NP_006578.2"/>
</dbReference>
<dbReference type="UCSC" id="uc003gxm.5">
    <molecule id="Q9Y5Q5-1"/>
    <property type="organism name" value="human"/>
</dbReference>
<dbReference type="AGR" id="HGNC:19012"/>
<dbReference type="CTD" id="10699"/>
<dbReference type="DisGeNET" id="10699"/>
<dbReference type="GeneCards" id="CORIN"/>
<dbReference type="HGNC" id="HGNC:19012">
    <property type="gene designation" value="CORIN"/>
</dbReference>
<dbReference type="HPA" id="ENSG00000145244">
    <property type="expression patterns" value="Tissue enriched (heart)"/>
</dbReference>
<dbReference type="MalaCards" id="CORIN"/>
<dbReference type="MIM" id="605236">
    <property type="type" value="gene"/>
</dbReference>
<dbReference type="MIM" id="614595">
    <property type="type" value="phenotype"/>
</dbReference>
<dbReference type="MIM" id="620734">
    <property type="type" value="phenotype"/>
</dbReference>
<dbReference type="neXtProt" id="NX_Q9Y5Q5"/>
<dbReference type="OpenTargets" id="ENSG00000145244"/>
<dbReference type="Orphanet" id="275555">
    <property type="disease" value="Preeclampsia"/>
</dbReference>
<dbReference type="PharmGKB" id="PA134972424"/>
<dbReference type="VEuPathDB" id="HostDB:ENSG00000145244"/>
<dbReference type="eggNOG" id="KOG3577">
    <property type="taxonomic scope" value="Eukaryota"/>
</dbReference>
<dbReference type="eggNOG" id="KOG3627">
    <property type="taxonomic scope" value="Eukaryota"/>
</dbReference>
<dbReference type="GeneTree" id="ENSGT00940000157103"/>
<dbReference type="InParanoid" id="Q9Y5Q5"/>
<dbReference type="OMA" id="TCLMPDQ"/>
<dbReference type="OrthoDB" id="7863416at2759"/>
<dbReference type="PAN-GO" id="Q9Y5Q5">
    <property type="GO annotations" value="1 GO annotation based on evolutionary models"/>
</dbReference>
<dbReference type="PhylomeDB" id="Q9Y5Q5"/>
<dbReference type="TreeFam" id="TF351678"/>
<dbReference type="PathwayCommons" id="Q9Y5Q5"/>
<dbReference type="Reactome" id="R-HSA-5578768">
    <property type="pathway name" value="Physiological factors"/>
</dbReference>
<dbReference type="SABIO-RK" id="Q9Y5Q5"/>
<dbReference type="SignaLink" id="Q9Y5Q5"/>
<dbReference type="BioGRID-ORCS" id="10699">
    <property type="hits" value="7 hits in 1149 CRISPR screens"/>
</dbReference>
<dbReference type="ChiTaRS" id="CORIN">
    <property type="organism name" value="human"/>
</dbReference>
<dbReference type="GeneWiki" id="CORIN"/>
<dbReference type="GenomeRNAi" id="10699"/>
<dbReference type="Pharos" id="Q9Y5Q5">
    <property type="development level" value="Tbio"/>
</dbReference>
<dbReference type="PRO" id="PR:Q9Y5Q5"/>
<dbReference type="Proteomes" id="UP000005640">
    <property type="component" value="Chromosome 4"/>
</dbReference>
<dbReference type="RNAct" id="Q9Y5Q5">
    <property type="molecule type" value="protein"/>
</dbReference>
<dbReference type="Bgee" id="ENSG00000145244">
    <property type="expression patterns" value="Expressed in cardiac muscle of right atrium and 118 other cell types or tissues"/>
</dbReference>
<dbReference type="ExpressionAtlas" id="Q9Y5Q5">
    <property type="expression patterns" value="baseline and differential"/>
</dbReference>
<dbReference type="GO" id="GO:0015629">
    <property type="term" value="C:actin cytoskeleton"/>
    <property type="evidence" value="ECO:0000314"/>
    <property type="project" value="HPA"/>
</dbReference>
<dbReference type="GO" id="GO:0009986">
    <property type="term" value="C:cell surface"/>
    <property type="evidence" value="ECO:0007669"/>
    <property type="project" value="Ensembl"/>
</dbReference>
<dbReference type="GO" id="GO:0005576">
    <property type="term" value="C:extracellular region"/>
    <property type="evidence" value="ECO:0007669"/>
    <property type="project" value="UniProtKB-SubCell"/>
</dbReference>
<dbReference type="GO" id="GO:0016604">
    <property type="term" value="C:nuclear body"/>
    <property type="evidence" value="ECO:0000314"/>
    <property type="project" value="HPA"/>
</dbReference>
<dbReference type="GO" id="GO:0005886">
    <property type="term" value="C:plasma membrane"/>
    <property type="evidence" value="ECO:0000314"/>
    <property type="project" value="UniProtKB"/>
</dbReference>
<dbReference type="GO" id="GO:0004175">
    <property type="term" value="F:endopeptidase activity"/>
    <property type="evidence" value="ECO:0000315"/>
    <property type="project" value="UniProtKB"/>
</dbReference>
<dbReference type="GO" id="GO:0004252">
    <property type="term" value="F:serine-type endopeptidase activity"/>
    <property type="evidence" value="ECO:0000314"/>
    <property type="project" value="UniProtKB"/>
</dbReference>
<dbReference type="GO" id="GO:0007565">
    <property type="term" value="P:female pregnancy"/>
    <property type="evidence" value="ECO:0000315"/>
    <property type="project" value="UniProtKB"/>
</dbReference>
<dbReference type="GO" id="GO:0016486">
    <property type="term" value="P:peptide hormone processing"/>
    <property type="evidence" value="ECO:0000314"/>
    <property type="project" value="UniProtKB"/>
</dbReference>
<dbReference type="GO" id="GO:0008217">
    <property type="term" value="P:regulation of blood pressure"/>
    <property type="evidence" value="ECO:0000250"/>
    <property type="project" value="UniProtKB"/>
</dbReference>
<dbReference type="GO" id="GO:1903779">
    <property type="term" value="P:regulation of cardiac conduction"/>
    <property type="evidence" value="ECO:0000304"/>
    <property type="project" value="Reactome"/>
</dbReference>
<dbReference type="GO" id="GO:0035813">
    <property type="term" value="P:regulation of renal sodium excretion"/>
    <property type="evidence" value="ECO:0000250"/>
    <property type="project" value="UniProtKB"/>
</dbReference>
<dbReference type="GO" id="GO:0003050">
    <property type="term" value="P:regulation of systemic arterial blood pressure by atrial natriuretic peptide"/>
    <property type="evidence" value="ECO:0000315"/>
    <property type="project" value="UniProtKB"/>
</dbReference>
<dbReference type="CDD" id="cd07445">
    <property type="entry name" value="CRD_corin_1"/>
    <property type="match status" value="1"/>
</dbReference>
<dbReference type="CDD" id="cd07888">
    <property type="entry name" value="CRD_corin_2"/>
    <property type="match status" value="1"/>
</dbReference>
<dbReference type="CDD" id="cd00112">
    <property type="entry name" value="LDLa"/>
    <property type="match status" value="7"/>
</dbReference>
<dbReference type="CDD" id="cd00190">
    <property type="entry name" value="Tryp_SPc"/>
    <property type="match status" value="1"/>
</dbReference>
<dbReference type="FunFam" id="2.40.10.10:FF:000015">
    <property type="entry name" value="Atrial natriuretic peptide-converting enzyme"/>
    <property type="match status" value="1"/>
</dbReference>
<dbReference type="FunFam" id="4.10.400.10:FF:000083">
    <property type="entry name" value="Atrial natriuretic peptide-converting enzyme"/>
    <property type="match status" value="1"/>
</dbReference>
<dbReference type="FunFam" id="4.10.400.10:FF:000103">
    <property type="entry name" value="Atrial natriuretic peptide-converting enzyme"/>
    <property type="match status" value="1"/>
</dbReference>
<dbReference type="FunFam" id="1.10.2000.10:FF:000013">
    <property type="entry name" value="atrial natriuretic peptide-converting enzyme"/>
    <property type="match status" value="1"/>
</dbReference>
<dbReference type="FunFam" id="1.10.2000.10:FF:000011">
    <property type="entry name" value="Corin, serine peptidase"/>
    <property type="match status" value="1"/>
</dbReference>
<dbReference type="FunFam" id="4.10.400.10:FF:000042">
    <property type="entry name" value="Corin, serine peptidase"/>
    <property type="match status" value="2"/>
</dbReference>
<dbReference type="FunFam" id="4.10.400.10:FF:000054">
    <property type="entry name" value="Corin, serine peptidase"/>
    <property type="match status" value="1"/>
</dbReference>
<dbReference type="FunFam" id="4.10.400.10:FF:000024">
    <property type="entry name" value="Low-density lipoprotein RecePtor related"/>
    <property type="match status" value="1"/>
</dbReference>
<dbReference type="FunFam" id="4.10.400.10:FF:000056">
    <property type="entry name" value="Terribly reduced optic lobes, isoform AM"/>
    <property type="match status" value="1"/>
</dbReference>
<dbReference type="Gene3D" id="1.10.2000.10">
    <property type="entry name" value="Frizzled cysteine-rich domain"/>
    <property type="match status" value="2"/>
</dbReference>
<dbReference type="Gene3D" id="4.10.400.10">
    <property type="entry name" value="Low-density Lipoprotein Receptor"/>
    <property type="match status" value="7"/>
</dbReference>
<dbReference type="Gene3D" id="2.40.10.10">
    <property type="entry name" value="Trypsin-like serine proteases"/>
    <property type="match status" value="1"/>
</dbReference>
<dbReference type="InterPro" id="IPR017052">
    <property type="entry name" value="Corin"/>
</dbReference>
<dbReference type="InterPro" id="IPR041762">
    <property type="entry name" value="Corin_CRD_1"/>
</dbReference>
<dbReference type="InterPro" id="IPR041763">
    <property type="entry name" value="Corin_CRD_2"/>
</dbReference>
<dbReference type="InterPro" id="IPR020067">
    <property type="entry name" value="Frizzled_dom"/>
</dbReference>
<dbReference type="InterPro" id="IPR036790">
    <property type="entry name" value="Frizzled_dom_sf"/>
</dbReference>
<dbReference type="InterPro" id="IPR036055">
    <property type="entry name" value="LDL_receptor-like_sf"/>
</dbReference>
<dbReference type="InterPro" id="IPR023415">
    <property type="entry name" value="LDLR_class-A_CS"/>
</dbReference>
<dbReference type="InterPro" id="IPR002172">
    <property type="entry name" value="LDrepeatLR_classA_rpt"/>
</dbReference>
<dbReference type="InterPro" id="IPR009003">
    <property type="entry name" value="Peptidase_S1_PA"/>
</dbReference>
<dbReference type="InterPro" id="IPR043504">
    <property type="entry name" value="Peptidase_S1_PA_chymotrypsin"/>
</dbReference>
<dbReference type="InterPro" id="IPR001190">
    <property type="entry name" value="SRCR"/>
</dbReference>
<dbReference type="InterPro" id="IPR036772">
    <property type="entry name" value="SRCR-like_dom_sf"/>
</dbReference>
<dbReference type="InterPro" id="IPR001254">
    <property type="entry name" value="Trypsin_dom"/>
</dbReference>
<dbReference type="InterPro" id="IPR033116">
    <property type="entry name" value="TRYPSIN_SER"/>
</dbReference>
<dbReference type="PANTHER" id="PTHR24252">
    <property type="entry name" value="ACROSIN-RELATED"/>
    <property type="match status" value="1"/>
</dbReference>
<dbReference type="PANTHER" id="PTHR24252:SF11">
    <property type="entry name" value="ATRIAL NATRIURETIC PEPTIDE-CONVERTING ENZYME ISOFORM X1"/>
    <property type="match status" value="1"/>
</dbReference>
<dbReference type="Pfam" id="PF01392">
    <property type="entry name" value="Fz"/>
    <property type="match status" value="2"/>
</dbReference>
<dbReference type="Pfam" id="PF00057">
    <property type="entry name" value="Ldl_recept_a"/>
    <property type="match status" value="6"/>
</dbReference>
<dbReference type="Pfam" id="PF15494">
    <property type="entry name" value="SRCR_2"/>
    <property type="match status" value="1"/>
</dbReference>
<dbReference type="Pfam" id="PF00089">
    <property type="entry name" value="Trypsin"/>
    <property type="match status" value="1"/>
</dbReference>
<dbReference type="PIRSF" id="PIRSF036376">
    <property type="entry name" value="Corin"/>
    <property type="match status" value="1"/>
</dbReference>
<dbReference type="PRINTS" id="PR00261">
    <property type="entry name" value="LDLRECEPTOR"/>
</dbReference>
<dbReference type="SMART" id="SM00063">
    <property type="entry name" value="FRI"/>
    <property type="match status" value="2"/>
</dbReference>
<dbReference type="SMART" id="SM00192">
    <property type="entry name" value="LDLa"/>
    <property type="match status" value="7"/>
</dbReference>
<dbReference type="SMART" id="SM00202">
    <property type="entry name" value="SR"/>
    <property type="match status" value="1"/>
</dbReference>
<dbReference type="SMART" id="SM00020">
    <property type="entry name" value="Tryp_SPc"/>
    <property type="match status" value="1"/>
</dbReference>
<dbReference type="SUPFAM" id="SSF63501">
    <property type="entry name" value="Frizzled cysteine-rich domain"/>
    <property type="match status" value="2"/>
</dbReference>
<dbReference type="SUPFAM" id="SSF57424">
    <property type="entry name" value="LDL receptor-like module"/>
    <property type="match status" value="7"/>
</dbReference>
<dbReference type="SUPFAM" id="SSF56487">
    <property type="entry name" value="SRCR-like"/>
    <property type="match status" value="1"/>
</dbReference>
<dbReference type="SUPFAM" id="SSF50494">
    <property type="entry name" value="Trypsin-like serine proteases"/>
    <property type="match status" value="1"/>
</dbReference>
<dbReference type="PROSITE" id="PS50038">
    <property type="entry name" value="FZ"/>
    <property type="match status" value="2"/>
</dbReference>
<dbReference type="PROSITE" id="PS01209">
    <property type="entry name" value="LDLRA_1"/>
    <property type="match status" value="6"/>
</dbReference>
<dbReference type="PROSITE" id="PS50068">
    <property type="entry name" value="LDLRA_2"/>
    <property type="match status" value="7"/>
</dbReference>
<dbReference type="PROSITE" id="PS00420">
    <property type="entry name" value="SRCR_1"/>
    <property type="match status" value="1"/>
</dbReference>
<dbReference type="PROSITE" id="PS50240">
    <property type="entry name" value="TRYPSIN_DOM"/>
    <property type="match status" value="1"/>
</dbReference>
<dbReference type="PROSITE" id="PS00135">
    <property type="entry name" value="TRYPSIN_SER"/>
    <property type="match status" value="1"/>
</dbReference>
<reference key="1">
    <citation type="journal article" date="1999" name="J. Biol. Chem.">
        <title>Corin, a mosaic transmembrane serine protease encoded by a novel cDNA from human heart.</title>
        <authorList>
            <person name="Yan W."/>
            <person name="Sheng N."/>
            <person name="Seto M."/>
            <person name="Morser J."/>
            <person name="Wu Q."/>
        </authorList>
    </citation>
    <scope>NUCLEOTIDE SEQUENCE [MRNA] (ISOFORM 1)</scope>
    <scope>TISSUE SPECIFICITY</scope>
    <scope>VARIANTS TYR-13 AND ARG-525</scope>
    <source>
        <tissue>Heart</tissue>
    </source>
</reference>
<reference key="2">
    <citation type="journal article" date="2005" name="Nature">
        <title>Generation and annotation of the DNA sequences of human chromosomes 2 and 4.</title>
        <authorList>
            <person name="Hillier L.W."/>
            <person name="Graves T.A."/>
            <person name="Fulton R.S."/>
            <person name="Fulton L.A."/>
            <person name="Pepin K.H."/>
            <person name="Minx P."/>
            <person name="Wagner-McPherson C."/>
            <person name="Layman D."/>
            <person name="Wylie K."/>
            <person name="Sekhon M."/>
            <person name="Becker M.C."/>
            <person name="Fewell G.A."/>
            <person name="Delehaunty K.D."/>
            <person name="Miner T.L."/>
            <person name="Nash W.E."/>
            <person name="Kremitzki C."/>
            <person name="Oddy L."/>
            <person name="Du H."/>
            <person name="Sun H."/>
            <person name="Bradshaw-Cordum H."/>
            <person name="Ali J."/>
            <person name="Carter J."/>
            <person name="Cordes M."/>
            <person name="Harris A."/>
            <person name="Isak A."/>
            <person name="van Brunt A."/>
            <person name="Nguyen C."/>
            <person name="Du F."/>
            <person name="Courtney L."/>
            <person name="Kalicki J."/>
            <person name="Ozersky P."/>
            <person name="Abbott S."/>
            <person name="Armstrong J."/>
            <person name="Belter E.A."/>
            <person name="Caruso L."/>
            <person name="Cedroni M."/>
            <person name="Cotton M."/>
            <person name="Davidson T."/>
            <person name="Desai A."/>
            <person name="Elliott G."/>
            <person name="Erb T."/>
            <person name="Fronick C."/>
            <person name="Gaige T."/>
            <person name="Haakenson W."/>
            <person name="Haglund K."/>
            <person name="Holmes A."/>
            <person name="Harkins R."/>
            <person name="Kim K."/>
            <person name="Kruchowski S.S."/>
            <person name="Strong C.M."/>
            <person name="Grewal N."/>
            <person name="Goyea E."/>
            <person name="Hou S."/>
            <person name="Levy A."/>
            <person name="Martinka S."/>
            <person name="Mead K."/>
            <person name="McLellan M.D."/>
            <person name="Meyer R."/>
            <person name="Randall-Maher J."/>
            <person name="Tomlinson C."/>
            <person name="Dauphin-Kohlberg S."/>
            <person name="Kozlowicz-Reilly A."/>
            <person name="Shah N."/>
            <person name="Swearengen-Shahid S."/>
            <person name="Snider J."/>
            <person name="Strong J.T."/>
            <person name="Thompson J."/>
            <person name="Yoakum M."/>
            <person name="Leonard S."/>
            <person name="Pearman C."/>
            <person name="Trani L."/>
            <person name="Radionenko M."/>
            <person name="Waligorski J.E."/>
            <person name="Wang C."/>
            <person name="Rock S.M."/>
            <person name="Tin-Wollam A.-M."/>
            <person name="Maupin R."/>
            <person name="Latreille P."/>
            <person name="Wendl M.C."/>
            <person name="Yang S.-P."/>
            <person name="Pohl C."/>
            <person name="Wallis J.W."/>
            <person name="Spieth J."/>
            <person name="Bieri T.A."/>
            <person name="Berkowicz N."/>
            <person name="Nelson J.O."/>
            <person name="Osborne J."/>
            <person name="Ding L."/>
            <person name="Meyer R."/>
            <person name="Sabo A."/>
            <person name="Shotland Y."/>
            <person name="Sinha P."/>
            <person name="Wohldmann P.E."/>
            <person name="Cook L.L."/>
            <person name="Hickenbotham M.T."/>
            <person name="Eldred J."/>
            <person name="Williams D."/>
            <person name="Jones T.A."/>
            <person name="She X."/>
            <person name="Ciccarelli F.D."/>
            <person name="Izaurralde E."/>
            <person name="Taylor J."/>
            <person name="Schmutz J."/>
            <person name="Myers R.M."/>
            <person name="Cox D.R."/>
            <person name="Huang X."/>
            <person name="McPherson J.D."/>
            <person name="Mardis E.R."/>
            <person name="Clifton S.W."/>
            <person name="Warren W.C."/>
            <person name="Chinwalla A.T."/>
            <person name="Eddy S.R."/>
            <person name="Marra M.A."/>
            <person name="Ovcharenko I."/>
            <person name="Furey T.S."/>
            <person name="Miller W."/>
            <person name="Eichler E.E."/>
            <person name="Bork P."/>
            <person name="Suyama M."/>
            <person name="Torrents D."/>
            <person name="Waterston R.H."/>
            <person name="Wilson R.K."/>
        </authorList>
    </citation>
    <scope>NUCLEOTIDE SEQUENCE [LARGE SCALE GENOMIC DNA]</scope>
</reference>
<reference key="3">
    <citation type="journal article" date="2004" name="Genome Res.">
        <title>The status, quality, and expansion of the NIH full-length cDNA project: the Mammalian Gene Collection (MGC).</title>
        <authorList>
            <consortium name="The MGC Project Team"/>
        </authorList>
    </citation>
    <scope>NUCLEOTIDE SEQUENCE [LARGE SCALE MRNA] (ISOFORM 1)</scope>
    <scope>VARIANTS TYR-13 AND ARG-525</scope>
</reference>
<reference key="4">
    <citation type="journal article" date="2000" name="Eur. J. Biochem.">
        <title>Localization of the mosaic transmembrane serine protease corin to heart myocytes.</title>
        <authorList>
            <person name="Hooper J.D."/>
            <person name="Scarman A.L."/>
            <person name="Clarke B.E."/>
            <person name="Normyle J.F."/>
            <person name="Antalis T.M."/>
        </authorList>
    </citation>
    <scope>NUCLEOTIDE SEQUENCE [MRNA] OF 734-1040</scope>
    <source>
        <tissue>Heart</tissue>
    </source>
</reference>
<reference key="5">
    <citation type="journal article" date="2000" name="Proc. Natl. Acad. Sci. U.S.A.">
        <title>Corin, a transmembrane cardiac serine protease, acts as a pro-atrial natriuretic peptide-converting enzyme.</title>
        <authorList>
            <person name="Yan W."/>
            <person name="Wu F."/>
            <person name="Morser J."/>
            <person name="Wu Q."/>
        </authorList>
    </citation>
    <scope>FUNCTION</scope>
    <scope>MUTAGENESIS OF SER-985</scope>
</reference>
<reference key="6">
    <citation type="journal article" date="2003" name="J. Biol. Chem.">
        <title>Functional analysis of the transmembrane domain and activation cleavage of human corin: design and characterization of a soluble corin.</title>
        <authorList>
            <person name="Knappe S."/>
            <person name="Wu F."/>
            <person name="Masikat M.R."/>
            <person name="Morser J."/>
            <person name="Wu Q."/>
        </authorList>
    </citation>
    <scope>ACTIVATION</scope>
    <scope>MUTAGENESIS OF ARG-801 AND SER-985</scope>
    <scope>BIOPHYSICOCHEMICAL PROPERTIES</scope>
</reference>
<reference key="7">
    <citation type="journal article" date="2007" name="J. Biol. Chem.">
        <title>Role of glycosylation in corin zymogen activation.</title>
        <authorList>
            <person name="Liao X."/>
            <person name="Wang W."/>
            <person name="Chen S."/>
            <person name="Wu Q."/>
        </authorList>
    </citation>
    <scope>PROTEOLYTIC PROCESSING</scope>
    <scope>GLYCOSYLATION</scope>
    <scope>DISULFIDE BONDS</scope>
</reference>
<reference key="8">
    <citation type="journal article" date="2009" name="Clin. Chim. Acta">
        <title>Enzyme-linked immunoabsorbent assay for detection of human serine protease corin in blood.</title>
        <authorList>
            <person name="Peleg A."/>
            <person name="Jaffe A.S."/>
            <person name="Hasin Y."/>
        </authorList>
    </citation>
    <scope>SUBCELLULAR LOCATION</scope>
    <scope>TISSUE SPECIFICITY</scope>
</reference>
<reference key="9">
    <citation type="journal article" date="2010" name="Clin. Chem.">
        <title>Processing of pro-B-type natriuretic peptide: furin and corin as candidate convertases.</title>
        <authorList>
            <person name="Semenov A.G."/>
            <person name="Tamm N.N."/>
            <person name="Seferian K.R."/>
            <person name="Postnikov A.B."/>
            <person name="Karpova N.S."/>
            <person name="Serebryanaya D.V."/>
            <person name="Koshkina E.V."/>
            <person name="Krasnoselsky M.I."/>
            <person name="Katrukha A.G."/>
        </authorList>
    </citation>
    <scope>FUNCTION</scope>
</reference>
<reference key="10">
    <citation type="journal article" date="2011" name="Biochem. Biophys. Res. Commun.">
        <title>Glycosylation and processing of pro-B-type natriuretic peptide in cardiomyocytes.</title>
        <authorList>
            <person name="Peng J."/>
            <person name="Jiang J."/>
            <person name="Wang W."/>
            <person name="Qi X."/>
            <person name="Sun X.L."/>
            <person name="Wu Q."/>
        </authorList>
    </citation>
    <scope>FUNCTION</scope>
</reference>
<reference key="11">
    <citation type="journal article" date="2011" name="J. Biol. Chem.">
        <title>Ectodomain shedding and autocleavage of the cardiac membrane protease corin.</title>
        <authorList>
            <person name="Jiang J."/>
            <person name="Wu S."/>
            <person name="Wang W."/>
            <person name="Chen S."/>
            <person name="Peng J."/>
            <person name="Zhang X."/>
            <person name="Wu Q."/>
        </authorList>
    </citation>
    <scope>SUBCELLULAR LOCATION</scope>
    <scope>PROTEOLYTIC PROCESSING</scope>
    <scope>MUTAGENESIS OF ARG-134; ARG-164; ARG-180; ARG-213; ARG-239; ARG-244; ARG-427; ARG-801 AND SER-985</scope>
</reference>
<reference key="12">
    <citation type="journal article" date="2011" name="J. Biol. Chem.">
        <title>Human corin isoforms with different cytoplasmic tails that alter cell surface targeting.</title>
        <authorList>
            <person name="Qi X."/>
            <person name="Jiang J."/>
            <person name="Zhu M."/>
            <person name="Wu Q."/>
        </authorList>
    </citation>
    <scope>ALTERNATIVE SPLICING (ISOFORMS 1 AND 2)</scope>
    <scope>FUNCTION</scope>
    <scope>SUBCELLULAR LOCATION</scope>
    <scope>GLYCOSYLATION</scope>
    <scope>MUTAGENESIS OF ASP-26 AND MET-30</scope>
</reference>
<reference key="13">
    <citation type="journal article" date="2012" name="Nature">
        <title>Role of corin in trophoblast invasion and uterine spiral artery remodelling in pregnancy.</title>
        <authorList>
            <person name="Cui Y."/>
            <person name="Wang W."/>
            <person name="Dong N."/>
            <person name="Lou J."/>
            <person name="Srinivasan D.K."/>
            <person name="Cheng W."/>
            <person name="Huang X."/>
            <person name="Liu M."/>
            <person name="Fang C."/>
            <person name="Peng J."/>
            <person name="Chen S."/>
            <person name="Wu S."/>
            <person name="Liu Z."/>
            <person name="Dong L."/>
            <person name="Zhou Y."/>
            <person name="Wu Q."/>
        </authorList>
    </citation>
    <scope>FUNCTION</scope>
    <scope>INVOLVEMENT IN PEE5</scope>
    <scope>TISSUE SPECIFICITY</scope>
    <scope>VARIANTS PEE5 GLU-317 AND GLY-472</scope>
</reference>
<reference key="14">
    <citation type="journal article" date="2008" name="Hum. Mutat.">
        <title>An integrated genetic and functional analysis of the role of type II transmembrane serine proteases (TMPRSSs) in hearing loss.</title>
        <authorList>
            <person name="Guipponi M."/>
            <person name="Toh M.-Y."/>
            <person name="Tan J."/>
            <person name="Park D."/>
            <person name="Hanson K."/>
            <person name="Ballana E."/>
            <person name="Kwong D."/>
            <person name="Cannon P.Z.F."/>
            <person name="Wu Q."/>
            <person name="Gout A."/>
            <person name="Delorenzi M."/>
            <person name="Speed T.P."/>
            <person name="Smith R.J.H."/>
            <person name="Dahl H.-H.M."/>
            <person name="Petersen M."/>
            <person name="Teasdale R.D."/>
            <person name="Estivill X."/>
            <person name="Park W.J."/>
            <person name="Scott H.S."/>
        </authorList>
    </citation>
    <scope>VARIANT ARG-525</scope>
</reference>
<reference key="15">
    <citation type="journal article" date="2023" name="N. Engl. J. Med.">
        <title>Corin and Left Atrial Cardiomyopathy, Hypertension, Arrhythmia, and Fibrosis.</title>
        <authorList>
            <person name="Baris Feldman H."/>
            <person name="Chai Gadot C."/>
            <person name="Zahler D."/>
            <person name="Mory A."/>
            <person name="Aviram G."/>
            <person name="Elhanan E."/>
            <person name="Shefer G."/>
            <person name="Goldiner I."/>
            <person name="Amir Y."/>
            <person name="Kurolap A."/>
            <person name="Ablin J.N."/>
        </authorList>
    </citation>
    <scope>INVOLVEMENT IN CMH30</scope>
</reference>
<organism>
    <name type="scientific">Homo sapiens</name>
    <name type="common">Human</name>
    <dbReference type="NCBI Taxonomy" id="9606"/>
    <lineage>
        <taxon>Eukaryota</taxon>
        <taxon>Metazoa</taxon>
        <taxon>Chordata</taxon>
        <taxon>Craniata</taxon>
        <taxon>Vertebrata</taxon>
        <taxon>Euteleostomi</taxon>
        <taxon>Mammalia</taxon>
        <taxon>Eutheria</taxon>
        <taxon>Euarchontoglires</taxon>
        <taxon>Primates</taxon>
        <taxon>Haplorrhini</taxon>
        <taxon>Catarrhini</taxon>
        <taxon>Hominidae</taxon>
        <taxon>Homo</taxon>
    </lineage>
</organism>
<keyword id="KW-0025">Alternative splicing</keyword>
<keyword id="KW-0068">Autocatalytic cleavage</keyword>
<keyword id="KW-0122">Cardiomyopathy</keyword>
<keyword id="KW-1003">Cell membrane</keyword>
<keyword id="KW-1015">Disulfide bond</keyword>
<keyword id="KW-0325">Glycoprotein</keyword>
<keyword id="KW-0378">Hydrolase</keyword>
<keyword id="KW-0472">Membrane</keyword>
<keyword id="KW-0645">Protease</keyword>
<keyword id="KW-1267">Proteomics identification</keyword>
<keyword id="KW-1185">Reference proteome</keyword>
<keyword id="KW-0677">Repeat</keyword>
<keyword id="KW-0964">Secreted</keyword>
<keyword id="KW-0720">Serine protease</keyword>
<keyword id="KW-0735">Signal-anchor</keyword>
<keyword id="KW-0812">Transmembrane</keyword>
<keyword id="KW-1133">Transmembrane helix</keyword>
<keyword id="KW-0865">Zymogen</keyword>
<comment type="function">
    <text evidence="2 9 15 16 18 19">Serine-type endopeptidase involved in atrial natriuretic peptide (NPPA) and brain natriuretic peptide (NPPB) processing (PubMed:10880574, PubMed:20489134, PubMed:21288900, PubMed:21763278). Converts through proteolytic cleavage the non-functional propeptides NPPA and NPPB into their active hormones, ANP and BNP(1-32) respectively, thereby regulating blood pressure in the heart and promoting natriuresis, diuresis and vasodilation (PubMed:10880574, PubMed:20489134, PubMed:21288900, PubMed:21763278). Proteolytic cleavage of pro-NPPA also plays a role in female pregnancy by promoting trophoblast invasion and spiral artery remodeling in uterus (PubMed:22437503). Also acts as a regulator of sodium reabsorption in kidney (By similarity).</text>
</comment>
<comment type="function">
    <molecule>Isoform 2</molecule>
    <text>Has weaker endopeptidase activity compared to isoform 1.</text>
</comment>
<comment type="activity regulation">
    <text>Inhibited in a dose-dependent manner by non-specific trypsin-like serine protease inhibitors including benzamidine.</text>
</comment>
<comment type="biophysicochemical properties">
    <kinetics>
        <KM evidence="10">1.28 mM for pyroGlu-Phe-Lys-pNA.HCl</KM>
        <KM evidence="10">3.52 mM for pyroGlu-Pro-Arg-pNA.HCl</KM>
        <KM evidence="10">2.95 mM for H-D-Pro-Phe-Arg-pNA.2HCl</KM>
        <KM evidence="10">1.92 mM for Bz-Ile-Glu-(gamma-OR)-Gly-Arg-pNA.HCl</KM>
        <KM evidence="10">16 mM for pyroGlu-Gly-Arg-pNA.HCl</KM>
    </kinetics>
</comment>
<comment type="interaction">
    <interactant intactId="EBI-17876114">
        <id>Q9Y5Q5</id>
    </interactant>
    <interactant intactId="EBI-13059134">
        <id>Q13520</id>
        <label>AQP6</label>
    </interactant>
    <organismsDiffer>false</organismsDiffer>
    <experiments>3</experiments>
</comment>
<comment type="interaction">
    <interactant intactId="EBI-17876114">
        <id>Q9Y5Q5</id>
    </interactant>
    <interactant intactId="EBI-18400628">
        <id>O00501</id>
        <label>CLDN5</label>
    </interactant>
    <organismsDiffer>false</organismsDiffer>
    <experiments>3</experiments>
</comment>
<comment type="interaction">
    <interactant intactId="EBI-17876114">
        <id>Q9Y5Q5</id>
    </interactant>
    <interactant intactId="EBI-4319440">
        <id>P54849</id>
        <label>EMP1</label>
    </interactant>
    <organismsDiffer>false</organismsDiffer>
    <experiments>3</experiments>
</comment>
<comment type="interaction">
    <interactant intactId="EBI-17876114">
        <id>Q9Y5Q5</id>
    </interactant>
    <interactant intactId="EBI-11721746">
        <id>Q8TED1</id>
        <label>GPX8</label>
    </interactant>
    <organismsDiffer>false</organismsDiffer>
    <experiments>3</experiments>
</comment>
<comment type="subcellular location">
    <subcellularLocation>
        <location evidence="14 16 17">Cell membrane</location>
        <topology evidence="14 16 17">Single-pass type II membrane protein</topology>
    </subcellularLocation>
    <text>May easily detach from the endothelial cell membrane.</text>
</comment>
<comment type="subcellular location">
    <molecule>Isoform 2</molecule>
    <subcellularLocation>
        <location>Cell membrane</location>
        <topology>Single-pass type II membrane protein</topology>
    </subcellularLocation>
    <text>Less efficiently targeted to the cell membrane compared to isoform 1.</text>
</comment>
<comment type="subcellular location">
    <molecule>Atrial natriuretic peptide-converting enzyme, 180 kDa soluble fragment</molecule>
    <subcellularLocation>
        <location>Secreted</location>
    </subcellularLocation>
    <text>Soluble form produced following cleavage by ADAM10.</text>
</comment>
<comment type="subcellular location">
    <molecule>Atrial natriuretic peptide-converting enzyme, 160 kDa soluble fragment</molecule>
    <subcellularLocation>
        <location>Secreted</location>
    </subcellularLocation>
    <text>Soluble form produced following autocatalytic cleavage.</text>
</comment>
<comment type="subcellular location">
    <molecule>Atrial natriuretic peptide-converting enzyme, 100 kDa soluble fragment</molecule>
    <subcellularLocation>
        <location>Secreted</location>
    </subcellularLocation>
    <text>Soluble form produced following autocatalytic cleavage.</text>
</comment>
<comment type="alternative products">
    <event type="alternative splicing"/>
    <isoform>
        <id>Q9Y5Q5-1</id>
        <name>1</name>
        <name>E1</name>
        <name>hE1</name>
        <sequence type="displayed"/>
    </isoform>
    <isoform>
        <id>Q9Y5Q5-2</id>
        <name>2</name>
        <name>E1a</name>
        <name>hE1a</name>
        <sequence type="described" ref="VSP_043952"/>
    </isoform>
</comment>
<comment type="tissue specificity">
    <text evidence="8 14 19">Highly expressed in heart. Expressed in heart myocytes. Also expressed in pregnant uterus. Detected in blood, in plasma as well as in serum (at protein level).</text>
</comment>
<comment type="domain">
    <text evidence="17">The DDNN motif is required for targeting to the cell membrane and enzyme activation.</text>
</comment>
<comment type="PTM">
    <text evidence="12 17">N-glycosylated; required for processing and activation.</text>
</comment>
<comment type="PTM">
    <text>Activated through proteolytic processing by a trypsin-like protease; cleaved into a N-terminal propeptide and an activated corin protease fragment. Different soluble forms are produced by cleavage and autocatalytic cleavage: Atrial natriuretic peptide-converting enzyme, 180 kDa soluble fragment is produced by cleavage by ADAM10, while 160 kDa and 100 kDa soluble fragments are produced by autocatalytic cleavage. Cleavage by ADAM10 to produce soluble 180 kDa soluble fragment takes place after the transmembrane region and before FZ 1.</text>
</comment>
<comment type="PTM">
    <text>A disulfide bond links the activated corin protease fragment and the N-terminal propeptide. The disulfide bond also links the activated corin protease fragment with soluble fragments (100 kDa, 160 kDa and 180 kDa fragments).</text>
</comment>
<comment type="disease" evidence="19">
    <disease id="DI-03420">
        <name>Pre-eclampsia/eclampsia 5</name>
        <acronym>PEE5</acronym>
        <description>A hypertensive disorder of pregnancy characterized by new hypertension (blood pressure 140/90 or greater) presenting after 20 weeks' gestation with clinically relevant proteinuria. It impacts 2 individuals, the mother and her child, both of whom can be severely affected. Preeclampsia is one of the causes of maternal mortality and morbidity worldwide.</description>
        <dbReference type="MIM" id="614595"/>
    </disease>
    <text>The disease is caused by variants affecting the gene represented in this entry.</text>
</comment>
<comment type="disease" evidence="20">
    <disease id="DI-06853">
        <name>Cardiomyopathy, familial hypertrophic, 30, atrial</name>
        <acronym>CMH30</acronym>
        <description>An autosomal recessive heart disease characterized by enlarged and thickened left atrium, left atrial fibrosis, atrial arrhythmias, and hypertension.</description>
        <dbReference type="MIM" id="620734"/>
    </disease>
    <text>The disease is caused by variants affecting the gene represented in this entry.</text>
</comment>
<comment type="miscellaneous">
    <text evidence="22">Initially named CORIN due to its abundant expression in the heart.</text>
</comment>
<comment type="similarity">
    <text evidence="6">Belongs to the peptidase S1 family.</text>
</comment>
<name>CORIN_HUMAN</name>
<sequence length="1042" mass="116486">MKQSPALAPEERCRRAGSPKPVLRADDNNMGNGCSQKLATANLLRFLLLVLIPCICALVLLLVILLSYVGTLQKVYFKSNGSEPLVTDGEIQGSDVILTNTIYNQSTVVSTAHPDQHVPAWTTDASLPGDQSHRNTSACMNITHSQCQMLPYHATLTPLLSVVRNMEMEKFLKFFTYLHRLSCYQHIMLFGCTLAFPECIIDGDDSHGLLPCRSFCEAAKEGCESVLGMVNYSWPDFLRCSQFRNQTESSNVSRICFSPQQENGKQLLCGRGENFLCASGICIPGKLQCNGYNDCDDWSDEAHCNCSENLFHCHTGKCLNYSLVCDGYDDCGDLSDEQNCDCNPTTEHRCGDGRCIAMEWVCDGDHDCVDKSDEVNCSCHSQGLVECRNGQCIPSTFQCDGDEDCKDGSDEENCSVIQTSCQEGDQRCLYNPCLDSCGGSSLCDPNNSLNNCSQCEPITLELCMNLPYNSTSYPNYFGHRTQKEASISWESSLFPALVQTNCYKYLMFFSCTILVPKCDVNTGEHIPPCRALCEHSKERCESVLGIVGLQWPEDTDCSQFPEENSDNQTCLMPDEYVEECSPSHFKCRSGQCVLASRRCDGQADCDDDSDEENCGCKERDLWECPSNKQCLKHTVICDGFPDCPDYMDEKNCSFCQDDELECANHACVSRDLWCDGEADCSDSSDEWDCVTLSINVNSSSFLMVHRAATEHHVCADGWQEILSQLACKQMGLGEPSVTKLIQEQEKEPRWLTLHSNWESLNGTTLHELLVNGQSCESRSKISLLCTKQDCGRRPAARMNKRILGGRTSRPGRWPWQCSLQSEPSGHICGCVLIAKKWVLTVAHCFEGRENAAVWKVVLGINNLDHPSVFMQTRFVKTIILHPRYSRAVVDYDISIVELSEDISETGYVRPVCLPNPEQWLEPDTYCYITGWGHMGNKMPFKLQEGEVRIISLEHCQSYFDMKTITTRMICAGYESGTVDSCMGDSGGPLVCEKPGGRWTLFGLTSWGSVCFSKVLGPGVYSNVSYFVEWIKRQIYIQTFLLN</sequence>